<reference key="1">
    <citation type="journal article" date="1989" name="Biochemistry">
        <title>Molecular organization of developmentally regulated Dictyostelium discoideum ubiquitin cDNAs.</title>
        <authorList>
            <person name="Ohmachi T."/>
            <person name="Giorda R."/>
            <person name="Shaw D.R."/>
            <person name="Ennis H.L."/>
        </authorList>
    </citation>
    <scope>NUCLEOTIDE SEQUENCE [MRNA]</scope>
</reference>
<reference key="2">
    <citation type="journal article" date="2005" name="Nature">
        <title>The genome of the social amoeba Dictyostelium discoideum.</title>
        <authorList>
            <person name="Eichinger L."/>
            <person name="Pachebat J.A."/>
            <person name="Gloeckner G."/>
            <person name="Rajandream M.A."/>
            <person name="Sucgang R."/>
            <person name="Berriman M."/>
            <person name="Song J."/>
            <person name="Olsen R."/>
            <person name="Szafranski K."/>
            <person name="Xu Q."/>
            <person name="Tunggal B."/>
            <person name="Kummerfeld S."/>
            <person name="Madera M."/>
            <person name="Konfortov B.A."/>
            <person name="Rivero F."/>
            <person name="Bankier A.T."/>
            <person name="Lehmann R."/>
            <person name="Hamlin N."/>
            <person name="Davies R."/>
            <person name="Gaudet P."/>
            <person name="Fey P."/>
            <person name="Pilcher K."/>
            <person name="Chen G."/>
            <person name="Saunders D."/>
            <person name="Sodergren E.J."/>
            <person name="Davis P."/>
            <person name="Kerhornou A."/>
            <person name="Nie X."/>
            <person name="Hall N."/>
            <person name="Anjard C."/>
            <person name="Hemphill L."/>
            <person name="Bason N."/>
            <person name="Farbrother P."/>
            <person name="Desany B."/>
            <person name="Just E."/>
            <person name="Morio T."/>
            <person name="Rost R."/>
            <person name="Churcher C.M."/>
            <person name="Cooper J."/>
            <person name="Haydock S."/>
            <person name="van Driessche N."/>
            <person name="Cronin A."/>
            <person name="Goodhead I."/>
            <person name="Muzny D.M."/>
            <person name="Mourier T."/>
            <person name="Pain A."/>
            <person name="Lu M."/>
            <person name="Harper D."/>
            <person name="Lindsay R."/>
            <person name="Hauser H."/>
            <person name="James K.D."/>
            <person name="Quiles M."/>
            <person name="Madan Babu M."/>
            <person name="Saito T."/>
            <person name="Buchrieser C."/>
            <person name="Wardroper A."/>
            <person name="Felder M."/>
            <person name="Thangavelu M."/>
            <person name="Johnson D."/>
            <person name="Knights A."/>
            <person name="Loulseged H."/>
            <person name="Mungall K.L."/>
            <person name="Oliver K."/>
            <person name="Price C."/>
            <person name="Quail M.A."/>
            <person name="Urushihara H."/>
            <person name="Hernandez J."/>
            <person name="Rabbinowitsch E."/>
            <person name="Steffen D."/>
            <person name="Sanders M."/>
            <person name="Ma J."/>
            <person name="Kohara Y."/>
            <person name="Sharp S."/>
            <person name="Simmonds M.N."/>
            <person name="Spiegler S."/>
            <person name="Tivey A."/>
            <person name="Sugano S."/>
            <person name="White B."/>
            <person name="Walker D."/>
            <person name="Woodward J.R."/>
            <person name="Winckler T."/>
            <person name="Tanaka Y."/>
            <person name="Shaulsky G."/>
            <person name="Schleicher M."/>
            <person name="Weinstock G.M."/>
            <person name="Rosenthal A."/>
            <person name="Cox E.C."/>
            <person name="Chisholm R.L."/>
            <person name="Gibbs R.A."/>
            <person name="Loomis W.F."/>
            <person name="Platzer M."/>
            <person name="Kay R.R."/>
            <person name="Williams J.G."/>
            <person name="Dear P.H."/>
            <person name="Noegel A.A."/>
            <person name="Barrell B.G."/>
            <person name="Kuspa A."/>
        </authorList>
    </citation>
    <scope>NUCLEOTIDE SEQUENCE [LARGE SCALE GENOMIC DNA]</scope>
    <source>
        <strain>AX4</strain>
    </source>
</reference>
<reference key="3">
    <citation type="journal article" date="2006" name="J. Proteome Res.">
        <title>Identification of novel centrosomal proteins in Dictyostelium discoideum by comparative proteomic approaches.</title>
        <authorList>
            <person name="Reinders Y."/>
            <person name="Schulz I."/>
            <person name="Graef R."/>
            <person name="Sickmann A."/>
        </authorList>
    </citation>
    <scope>IDENTIFICATION BY MASS SPECTROMETRY [LARGE SCALE ANALYSIS]</scope>
</reference>
<feature type="chain" id="PRO_0000396321" description="Ubiquitin">
    <location>
        <begin position="1"/>
        <end position="76"/>
    </location>
</feature>
<feature type="chain" id="PRO_0000396322" description="Ubiquitin">
    <location>
        <begin position="77"/>
        <end position="152"/>
    </location>
</feature>
<feature type="chain" id="PRO_0000396323" description="Ubiquitin">
    <location>
        <begin position="153"/>
        <end position="228"/>
    </location>
</feature>
<feature type="chain" id="PRO_0000396324" description="Ubiquitin">
    <location>
        <begin position="229"/>
        <end position="304"/>
    </location>
</feature>
<feature type="chain" id="PRO_0000396325" description="Ubiquitin">
    <location>
        <begin position="305"/>
        <end position="380"/>
    </location>
</feature>
<feature type="chain" id="PRO_0000396326" description="Ubiquitin">
    <location>
        <begin position="381"/>
        <end position="456"/>
    </location>
</feature>
<feature type="chain" id="PRO_0000396327" description="Ubiquitin">
    <location>
        <begin position="457"/>
        <end position="532"/>
    </location>
</feature>
<feature type="propeptide" id="PRO_0000396328">
    <location>
        <position position="533"/>
    </location>
</feature>
<feature type="domain" description="Ubiquitin-like 1" evidence="2">
    <location>
        <begin position="1"/>
        <end position="76"/>
    </location>
</feature>
<feature type="domain" description="Ubiquitin-like 2" evidence="2">
    <location>
        <begin position="77"/>
        <end position="152"/>
    </location>
</feature>
<feature type="domain" description="Ubiquitin-like 3" evidence="2">
    <location>
        <begin position="153"/>
        <end position="228"/>
    </location>
</feature>
<feature type="domain" description="Ubiquitin-like 4" evidence="2">
    <location>
        <begin position="229"/>
        <end position="304"/>
    </location>
</feature>
<feature type="domain" description="Ubiquitin-like 5" evidence="2">
    <location>
        <begin position="305"/>
        <end position="380"/>
    </location>
</feature>
<feature type="domain" description="Ubiquitin-like 6" evidence="2">
    <location>
        <begin position="381"/>
        <end position="456"/>
    </location>
</feature>
<feature type="domain" description="Ubiquitin-like 7" evidence="2">
    <location>
        <begin position="457"/>
        <end position="532"/>
    </location>
</feature>
<feature type="cross-link" description="Glycyl lysine isopeptide (Lys-Gly) (interchain with G-Cter in ubiquitin)" evidence="1">
    <location>
        <position position="48"/>
    </location>
</feature>
<feature type="cross-link" description="Glycyl lysine isopeptide (Gly-Lys) (interchain with K-? in acceptor proteins)" evidence="2">
    <location>
        <position position="76"/>
    </location>
</feature>
<protein>
    <recommendedName>
        <fullName>Polyubiquitin-F</fullName>
    </recommendedName>
    <component>
        <recommendedName>
            <fullName>Ubiquitin</fullName>
        </recommendedName>
    </component>
</protein>
<name>UBIQF_DICDI</name>
<accession>P0CG78</accession>
<accession>P08618</accession>
<accession>Q54HH5</accession>
<accession>Q54L38</accession>
<accession>Q54SE1</accession>
<accession>Q54SP3</accession>
<accession>Q54UW7</accession>
<accession>Q54WJ3</accession>
<accession>Q550W7</accession>
<accession>Q55DZ5</accession>
<accession>Q86KQ4</accession>
<sequence>MQIFVKTLTGKTITLEVEGSDNIENVKAKIQDKEGIPPDQQRLIFAGKQLEDGRTLSDYNIQKESTLHLVLRLRGGMQIFVKTLTGKTITLEVEGSDNIENVKAKIQDKEGIPPDQQRLIFAGKQLEDGRTLSDYNIQKESTLHLVLRLRGGMQIFVKTLTGKTITLEVEGSDNIENVKAKIQDKEGIPPDQQRLIFAGKQLEDGRTLSDYNIQKESTLHLVLRLRGGMQIFVKTLTGKTITLEVEGSDNIENVKAKIQDKEGIPPDQQRLIFAGKQLEDGRTLSDYNIQKESTLHLVLRLRGGMQIFVKTLTGKTITLEVEGSDNIENVKAKIQDKEGIPPDQQRLIFAGKQLEDGRTLSDYNIQKESTLHLVLRLRGGMQIFVKTLTGKTITLEVEGSDNIENVKAKIQDKEGIPPDQQRLIFAGKQLEDGRTLSDYNIQKESTLHLVLRLRGGMQIFVKTLTGKTITLEVEGSDNIENVKAKIQDKEGIPPDQQRLIFAGKQLEDGRTLSDYNIQKESTLHLVLRLRGGN</sequence>
<evidence type="ECO:0000250" key="1"/>
<evidence type="ECO:0000255" key="2">
    <source>
        <dbReference type="PROSITE-ProRule" id="PRU00214"/>
    </source>
</evidence>
<evidence type="ECO:0000305" key="3"/>
<organism>
    <name type="scientific">Dictyostelium discoideum</name>
    <name type="common">Social amoeba</name>
    <dbReference type="NCBI Taxonomy" id="44689"/>
    <lineage>
        <taxon>Eukaryota</taxon>
        <taxon>Amoebozoa</taxon>
        <taxon>Evosea</taxon>
        <taxon>Eumycetozoa</taxon>
        <taxon>Dictyostelia</taxon>
        <taxon>Dictyosteliales</taxon>
        <taxon>Dictyosteliaceae</taxon>
        <taxon>Dictyostelium</taxon>
    </lineage>
</organism>
<proteinExistence type="evidence at protein level"/>
<comment type="function">
    <text evidence="1">Ubiquitin exists either covalently attached to another protein, or free (unanchored). When covalently bound, it is conjugated to target proteins via an isopeptide bond either as a monomer (monoubiquitin), a polymer linked via different Lys residues of the ubiquitin (polyubiquitin chains) or a linear polymer linked via the initiator Met of the ubiquitin (linear polyubiquitin chains). Polyubiquitin chains, when attached to a target protein, have different functions depending on the Lys residue of the ubiquitin that is linked: Lys-48-linked is involved in protein degradation via the proteasome. Linear polymer chains formed via attachment by the initiator Met lead to cell signaling. Ubiquitin is usually conjugated to Lys residues of target proteins, however, in rare cases, conjugation to Cys or Ser residues has been observed. When polyubiquitin is free (unanchored-polyubiquitin), it also has distinct roles, such as in activation of protein kinases, and in signaling (By similarity).</text>
</comment>
<comment type="subcellular location">
    <subcellularLocation>
        <location evidence="1">Cytoplasm</location>
    </subcellularLocation>
    <subcellularLocation>
        <location evidence="1">Nucleus</location>
    </subcellularLocation>
</comment>
<comment type="miscellaneous">
    <text>Ubiquitin is synthesized as a polyubiquitin precursor with exact head to tail repeats. Some ubiquitin genes contain a single copy of ubiquitin fused to a ribosomal protein. In D.discoideum there are 9 genes: ubqA: 5 copies of Ub and a final Asn; ubqB: 1 copy of Ub and ribosomal protein eL40; ubqC: 1 copy of Ub and ribosomal protein eS31; ubqD: 3 copies of Ub and a final Leu; ubqF: 7 copies of Ub and a final Asn; ubqG: 5 copies of Ub and a final Leu; ubqH: 5 copies of Ub and a final Asn; ubqI: 4 copies of Ub and a final Asn; ubqJ: 4 copies of Ub and a final Asn.</text>
</comment>
<comment type="miscellaneous">
    <text>For the sake of clarity sequence features are annotated only for the first chain, and are not repeated for each of the following chains.</text>
</comment>
<comment type="similarity">
    <text evidence="3">Belongs to the ubiquitin family.</text>
</comment>
<keyword id="KW-0963">Cytoplasm</keyword>
<keyword id="KW-1017">Isopeptide bond</keyword>
<keyword id="KW-0539">Nucleus</keyword>
<keyword id="KW-1185">Reference proteome</keyword>
<keyword id="KW-0677">Repeat</keyword>
<keyword id="KW-0832">Ubl conjugation</keyword>
<gene>
    <name type="primary">ubqF</name>
    <name type="ORF">DDB_G0289449</name>
</gene>
<dbReference type="EMBL" id="M23753">
    <property type="protein sequence ID" value="AAA33267.1"/>
    <property type="molecule type" value="mRNA"/>
</dbReference>
<dbReference type="EMBL" id="AAFI02000141">
    <property type="protein sequence ID" value="EAL62704.1"/>
    <property type="molecule type" value="Genomic_DNA"/>
</dbReference>
<dbReference type="PIR" id="A34080">
    <property type="entry name" value="A34080"/>
</dbReference>
<dbReference type="RefSeq" id="XP_636210.1">
    <property type="nucleotide sequence ID" value="XM_631118.1"/>
</dbReference>
<dbReference type="SMR" id="P0CG78"/>
<dbReference type="FunCoup" id="P0CG78">
    <property type="interactions" value="508"/>
</dbReference>
<dbReference type="STRING" id="44689.P0CG78"/>
<dbReference type="PaxDb" id="44689-DDB0201651"/>
<dbReference type="EnsemblProtists" id="EAL62704">
    <property type="protein sequence ID" value="EAL62704"/>
    <property type="gene ID" value="DDB_G0289449"/>
</dbReference>
<dbReference type="GeneID" id="8627148"/>
<dbReference type="KEGG" id="ddi:DDB_G0289449"/>
<dbReference type="dictyBase" id="DDB_G0289449">
    <property type="gene designation" value="ubqF"/>
</dbReference>
<dbReference type="VEuPathDB" id="AmoebaDB:DDB_G0289449"/>
<dbReference type="eggNOG" id="KOG0001">
    <property type="taxonomic scope" value="Eukaryota"/>
</dbReference>
<dbReference type="HOGENOM" id="CLU_010412_1_2_1"/>
<dbReference type="InParanoid" id="P0CG78"/>
<dbReference type="OMA" id="CIWYCVY"/>
<dbReference type="PhylomeDB" id="P0CG78"/>
<dbReference type="Reactome" id="R-DDI-110314">
    <property type="pathway name" value="Recognition of DNA damage by PCNA-containing replication complex"/>
</dbReference>
<dbReference type="Reactome" id="R-DDI-1169408">
    <property type="pathway name" value="ISG15 antiviral mechanism"/>
</dbReference>
<dbReference type="Reactome" id="R-DDI-1358803">
    <property type="pathway name" value="Downregulation of ERBB2:ERBB3 signaling"/>
</dbReference>
<dbReference type="Reactome" id="R-DDI-174048">
    <property type="pathway name" value="APC/C:Cdc20 mediated degradation of Cyclin B"/>
</dbReference>
<dbReference type="Reactome" id="R-DDI-174084">
    <property type="pathway name" value="Autodegradation of Cdh1 by Cdh1:APC/C"/>
</dbReference>
<dbReference type="Reactome" id="R-DDI-174154">
    <property type="pathway name" value="APC/C:Cdc20 mediated degradation of Securin"/>
</dbReference>
<dbReference type="Reactome" id="R-DDI-174178">
    <property type="pathway name" value="APC/C:Cdh1 mediated degradation of Cdc20 and other APC/C:Cdh1 targeted proteins in late mitosis/early G1"/>
</dbReference>
<dbReference type="Reactome" id="R-DDI-174184">
    <property type="pathway name" value="Cdc20:Phospho-APC/C mediated degradation of Cyclin A"/>
</dbReference>
<dbReference type="Reactome" id="R-DDI-179409">
    <property type="pathway name" value="APC-Cdc20 mediated degradation of Nek2A"/>
</dbReference>
<dbReference type="Reactome" id="R-DDI-2467813">
    <property type="pathway name" value="Separation of Sister Chromatids"/>
</dbReference>
<dbReference type="Reactome" id="R-DDI-2559582">
    <property type="pathway name" value="Senescence-Associated Secretory Phenotype (SASP)"/>
</dbReference>
<dbReference type="Reactome" id="R-DDI-349425">
    <property type="pathway name" value="Autodegradation of the E3 ubiquitin ligase COP1"/>
</dbReference>
<dbReference type="Reactome" id="R-DDI-382556">
    <property type="pathway name" value="ABC-family proteins mediated transport"/>
</dbReference>
<dbReference type="Reactome" id="R-DDI-450408">
    <property type="pathway name" value="AUF1 (hnRNP D0) binds and destabilizes mRNA"/>
</dbReference>
<dbReference type="Reactome" id="R-DDI-4641258">
    <property type="pathway name" value="Degradation of DVL"/>
</dbReference>
<dbReference type="Reactome" id="R-DDI-532668">
    <property type="pathway name" value="N-glycan trimming in the ER and Calnexin/Calreticulin cycle"/>
</dbReference>
<dbReference type="Reactome" id="R-DDI-5358346">
    <property type="pathway name" value="Hedgehog ligand biogenesis"/>
</dbReference>
<dbReference type="Reactome" id="R-DDI-5632684">
    <property type="pathway name" value="Hedgehog 'on' state"/>
</dbReference>
<dbReference type="Reactome" id="R-DDI-5655862">
    <property type="pathway name" value="Translesion synthesis by POLK"/>
</dbReference>
<dbReference type="Reactome" id="R-DDI-5658442">
    <property type="pathway name" value="Regulation of RAS by GAPs"/>
</dbReference>
<dbReference type="Reactome" id="R-DDI-5675482">
    <property type="pathway name" value="Regulation of necroptotic cell death"/>
</dbReference>
<dbReference type="Reactome" id="R-DDI-5687128">
    <property type="pathway name" value="MAPK6/MAPK4 signaling"/>
</dbReference>
<dbReference type="Reactome" id="R-DDI-5689603">
    <property type="pathway name" value="UCH proteinases"/>
</dbReference>
<dbReference type="Reactome" id="R-DDI-5689877">
    <property type="pathway name" value="Josephin domain DUBs"/>
</dbReference>
<dbReference type="Reactome" id="R-DDI-5689880">
    <property type="pathway name" value="Ub-specific processing proteases"/>
</dbReference>
<dbReference type="Reactome" id="R-DDI-5689901">
    <property type="pathway name" value="Metalloprotease DUBs"/>
</dbReference>
<dbReference type="Reactome" id="R-DDI-5696394">
    <property type="pathway name" value="DNA Damage Recognition in GG-NER"/>
</dbReference>
<dbReference type="Reactome" id="R-DDI-5696395">
    <property type="pathway name" value="Formation of Incision Complex in GG-NER"/>
</dbReference>
<dbReference type="Reactome" id="R-DDI-5696397">
    <property type="pathway name" value="Gap-filling DNA repair synthesis and ligation in GG-NER"/>
</dbReference>
<dbReference type="Reactome" id="R-DDI-6781823">
    <property type="pathway name" value="Formation of TC-NER Pre-Incision Complex"/>
</dbReference>
<dbReference type="Reactome" id="R-DDI-6782135">
    <property type="pathway name" value="Dual incision in TC-NER"/>
</dbReference>
<dbReference type="Reactome" id="R-DDI-6782210">
    <property type="pathway name" value="Gap-filling DNA repair synthesis and ligation in TC-NER"/>
</dbReference>
<dbReference type="Reactome" id="R-DDI-68949">
    <property type="pathway name" value="Orc1 removal from chromatin"/>
</dbReference>
<dbReference type="Reactome" id="R-DDI-69017">
    <property type="pathway name" value="CDK-mediated phosphorylation and removal of Cdc6"/>
</dbReference>
<dbReference type="Reactome" id="R-DDI-69231">
    <property type="pathway name" value="Cyclin D associated events in G1"/>
</dbReference>
<dbReference type="Reactome" id="R-DDI-69601">
    <property type="pathway name" value="Ubiquitin Mediated Degradation of Phosphorylated Cdc25A"/>
</dbReference>
<dbReference type="Reactome" id="R-DDI-8854050">
    <property type="pathway name" value="FBXL7 down-regulates AURKA during mitotic entry and in early mitosis"/>
</dbReference>
<dbReference type="Reactome" id="R-DDI-8866652">
    <property type="pathway name" value="Synthesis of active ubiquitin: roles of E1 and E2 enzymes"/>
</dbReference>
<dbReference type="Reactome" id="R-DDI-8866654">
    <property type="pathway name" value="E3 ubiquitin ligases ubiquitinate target proteins"/>
</dbReference>
<dbReference type="Reactome" id="R-DDI-8948747">
    <property type="pathway name" value="Regulation of PTEN localization"/>
</dbReference>
<dbReference type="Reactome" id="R-DDI-8948751">
    <property type="pathway name" value="Regulation of PTEN stability and activity"/>
</dbReference>
<dbReference type="Reactome" id="R-DDI-8951664">
    <property type="pathway name" value="Neddylation"/>
</dbReference>
<dbReference type="Reactome" id="R-DDI-901032">
    <property type="pathway name" value="ER Quality Control Compartment (ERQC)"/>
</dbReference>
<dbReference type="Reactome" id="R-DDI-9020702">
    <property type="pathway name" value="Interleukin-1 signaling"/>
</dbReference>
<dbReference type="Reactome" id="R-DDI-9033241">
    <property type="pathway name" value="Peroxisomal protein import"/>
</dbReference>
<dbReference type="Reactome" id="R-DDI-917729">
    <property type="pathway name" value="Endosomal Sorting Complex Required For Transport (ESCRT)"/>
</dbReference>
<dbReference type="Reactome" id="R-DDI-917937">
    <property type="pathway name" value="Iron uptake and transport"/>
</dbReference>
<dbReference type="Reactome" id="R-DDI-936440">
    <property type="pathway name" value="Negative regulators of DDX58/IFIH1 signaling"/>
</dbReference>
<dbReference type="Reactome" id="R-DDI-9646399">
    <property type="pathway name" value="Aggrephagy"/>
</dbReference>
<dbReference type="Reactome" id="R-DDI-9664873">
    <property type="pathway name" value="Pexophagy"/>
</dbReference>
<dbReference type="Reactome" id="R-DDI-9755511">
    <property type="pathway name" value="KEAP1-NFE2L2 pathway"/>
</dbReference>
<dbReference type="Reactome" id="R-DDI-9758274">
    <property type="pathway name" value="Regulation of NF-kappa B signaling"/>
</dbReference>
<dbReference type="Reactome" id="R-DDI-983168">
    <property type="pathway name" value="Antigen processing: Ubiquitination &amp; Proteasome degradation"/>
</dbReference>
<dbReference type="Reactome" id="R-DDI-9861718">
    <property type="pathway name" value="Regulation of pyruvate metabolism"/>
</dbReference>
<dbReference type="Reactome" id="R-DDI-9909505">
    <property type="pathway name" value="Modulation of host responses by IFN-stimulated genes"/>
</dbReference>
<dbReference type="PRO" id="PR:P0CG78"/>
<dbReference type="Proteomes" id="UP000002195">
    <property type="component" value="Chromosome 5"/>
</dbReference>
<dbReference type="GO" id="GO:0005737">
    <property type="term" value="C:cytoplasm"/>
    <property type="evidence" value="ECO:0000318"/>
    <property type="project" value="GO_Central"/>
</dbReference>
<dbReference type="GO" id="GO:0005634">
    <property type="term" value="C:nucleus"/>
    <property type="evidence" value="ECO:0000318"/>
    <property type="project" value="GO_Central"/>
</dbReference>
<dbReference type="GO" id="GO:0031386">
    <property type="term" value="F:protein tag activity"/>
    <property type="evidence" value="ECO:0000318"/>
    <property type="project" value="GO_Central"/>
</dbReference>
<dbReference type="GO" id="GO:0031625">
    <property type="term" value="F:ubiquitin protein ligase binding"/>
    <property type="evidence" value="ECO:0000318"/>
    <property type="project" value="GO_Central"/>
</dbReference>
<dbReference type="GO" id="GO:0019941">
    <property type="term" value="P:modification-dependent protein catabolic process"/>
    <property type="evidence" value="ECO:0000318"/>
    <property type="project" value="GO_Central"/>
</dbReference>
<dbReference type="GO" id="GO:0016567">
    <property type="term" value="P:protein ubiquitination"/>
    <property type="evidence" value="ECO:0000318"/>
    <property type="project" value="GO_Central"/>
</dbReference>
<dbReference type="CDD" id="cd01803">
    <property type="entry name" value="Ubl_ubiquitin"/>
    <property type="match status" value="7"/>
</dbReference>
<dbReference type="FunFam" id="3.10.20.90:FF:000158">
    <property type="entry name" value="Polyubiquitin 5"/>
    <property type="match status" value="3"/>
</dbReference>
<dbReference type="FunFam" id="3.10.20.90:FF:000014">
    <property type="entry name" value="Ubiquitin-60S ribosomal L40 fusion"/>
    <property type="match status" value="4"/>
</dbReference>
<dbReference type="Gene3D" id="3.10.20.90">
    <property type="entry name" value="Phosphatidylinositol 3-kinase Catalytic Subunit, Chain A, domain 1"/>
    <property type="match status" value="7"/>
</dbReference>
<dbReference type="InterPro" id="IPR000626">
    <property type="entry name" value="Ubiquitin-like_dom"/>
</dbReference>
<dbReference type="InterPro" id="IPR029071">
    <property type="entry name" value="Ubiquitin-like_domsf"/>
</dbReference>
<dbReference type="InterPro" id="IPR019954">
    <property type="entry name" value="Ubiquitin_CS"/>
</dbReference>
<dbReference type="InterPro" id="IPR019956">
    <property type="entry name" value="Ubiquitin_dom"/>
</dbReference>
<dbReference type="InterPro" id="IPR050158">
    <property type="entry name" value="Ubiquitin_ubiquitin-like"/>
</dbReference>
<dbReference type="PANTHER" id="PTHR10666">
    <property type="entry name" value="UBIQUITIN"/>
    <property type="match status" value="1"/>
</dbReference>
<dbReference type="Pfam" id="PF00240">
    <property type="entry name" value="ubiquitin"/>
    <property type="match status" value="7"/>
</dbReference>
<dbReference type="PRINTS" id="PR00348">
    <property type="entry name" value="UBIQUITIN"/>
</dbReference>
<dbReference type="SMART" id="SM00213">
    <property type="entry name" value="UBQ"/>
    <property type="match status" value="7"/>
</dbReference>
<dbReference type="SUPFAM" id="SSF54236">
    <property type="entry name" value="Ubiquitin-like"/>
    <property type="match status" value="7"/>
</dbReference>
<dbReference type="PROSITE" id="PS00299">
    <property type="entry name" value="UBIQUITIN_1"/>
    <property type="match status" value="7"/>
</dbReference>
<dbReference type="PROSITE" id="PS50053">
    <property type="entry name" value="UBIQUITIN_2"/>
    <property type="match status" value="7"/>
</dbReference>